<sequence length="267" mass="30138">MAEEMRQELSALAAIFCGPHEWEMLSCSETDGAVFRIHTTAEGLAGEDVPLELAFHLPAGYPSCLPGISVNSERLTRAQCVTVKEKLLGEARRLLSEPMVHELVLWTQQNLRHILSQTETESSNGTCTLPESSTVDGGLWMTLLRLDHMRARTKYVKVVEKWASELRLTGRLMFMGKMILILLQGDRSNIKEYLILQKTSKVDVDSSGKKCKEKMISVLSETKVQTEHKRFLAFEVKEYSTLEELQKEFETAGLQELFSECVLGLVK</sequence>
<comment type="function">
    <text evidence="2">Enhancer of SUMO conjugation. Via its interaction with UBE2I/UBC9, increases SUMO conjugation to proteins by promoting the binding of E1 and E2 enzymes, thioester linkage between SUMO and UBE2I/UBC9 and transfer of SUMO to specific target proteins which include HIF1A, PIAS, NFKBIA, NR3C1 and TOP1. Positively regulates the NF-kappa-B signaling pathway by enhancing the sumoylation of NF-kappa-B inhibitor alpha (NFKBIA), promoting its stabilization which consequently leads to an increased inhibition of NF-kappa-B transcriptional activity. Negatively regulates the hypoxia-inducible factor-1 alpha (HIF1A) signaling pathway by increasing the sumoylation of HIF1A, promoting its stabilization, transcriptional activity and the expression of its target gene VEGFA during hypoxia. Has no effect on ubiquitination.</text>
</comment>
<comment type="subunit">
    <text evidence="2">Interacts with UBE2I/UBC9, NFKBIA, HIF1A and NCOA2.</text>
</comment>
<comment type="subcellular location">
    <subcellularLocation>
        <location evidence="2">Nucleus</location>
    </subcellularLocation>
    <subcellularLocation>
        <location evidence="2">Cytoplasm</location>
    </subcellularLocation>
    <text evidence="2">Colocalizes with UBC9/UBE2I in nuclear spots.</text>
</comment>
<comment type="domain">
    <text evidence="1">The RWD domain is required for the sumoylation enhancement activity.</text>
</comment>
<organism>
    <name type="scientific">Rattus norvegicus</name>
    <name type="common">Rat</name>
    <dbReference type="NCBI Taxonomy" id="10116"/>
    <lineage>
        <taxon>Eukaryota</taxon>
        <taxon>Metazoa</taxon>
        <taxon>Chordata</taxon>
        <taxon>Craniata</taxon>
        <taxon>Vertebrata</taxon>
        <taxon>Euteleostomi</taxon>
        <taxon>Mammalia</taxon>
        <taxon>Eutheria</taxon>
        <taxon>Euarchontoglires</taxon>
        <taxon>Glires</taxon>
        <taxon>Rodentia</taxon>
        <taxon>Myomorpha</taxon>
        <taxon>Muroidea</taxon>
        <taxon>Muridae</taxon>
        <taxon>Murinae</taxon>
        <taxon>Rattus</taxon>
    </lineage>
</organism>
<proteinExistence type="evidence at transcript level"/>
<reference key="1">
    <citation type="journal article" date="2007" name="Cell">
        <title>RSUME, a small RWD-containing protein, enhances SUMO conjugation and stabilizes HIF-1alpha during hypoxia.</title>
        <authorList>
            <person name="Carbia-Nagashima A."/>
            <person name="Gerez J."/>
            <person name="Perez-Castro C."/>
            <person name="Paez-Pereda M."/>
            <person name="Silberstein S."/>
            <person name="Stalla G.K."/>
            <person name="Holsboer F."/>
            <person name="Arzt E."/>
        </authorList>
    </citation>
    <scope>NUCLEOTIDE SEQUENCE [MRNA]</scope>
    <source>
        <tissue>Pituitary tumor</tissue>
    </source>
</reference>
<protein>
    <recommendedName>
        <fullName>RWD domain-containing protein 3</fullName>
    </recommendedName>
    <alternativeName>
        <fullName>RWD domain-containing sumoylation enhancer</fullName>
        <shortName evidence="4">RSUME</shortName>
    </alternativeName>
</protein>
<accession>P0C7N0</accession>
<dbReference type="RefSeq" id="NP_001121624.1">
    <property type="nucleotide sequence ID" value="NM_001128152.1"/>
</dbReference>
<dbReference type="SMR" id="P0C7N0"/>
<dbReference type="FunCoup" id="P0C7N0">
    <property type="interactions" value="353"/>
</dbReference>
<dbReference type="STRING" id="10116.ENSRNOP00000039966"/>
<dbReference type="PhosphoSitePlus" id="P0C7N0"/>
<dbReference type="PaxDb" id="10116-ENSRNOP00000039966"/>
<dbReference type="GeneID" id="65026"/>
<dbReference type="KEGG" id="rno:65026"/>
<dbReference type="UCSC" id="RGD:620472">
    <property type="organism name" value="rat"/>
</dbReference>
<dbReference type="AGR" id="RGD:620472"/>
<dbReference type="CTD" id="25950"/>
<dbReference type="RGD" id="620472">
    <property type="gene designation" value="Rwdd3"/>
</dbReference>
<dbReference type="VEuPathDB" id="HostDB:ENSRNOG00000029893"/>
<dbReference type="eggNOG" id="ENOG502S87K">
    <property type="taxonomic scope" value="Eukaryota"/>
</dbReference>
<dbReference type="HOGENOM" id="CLU_087636_0_0_1"/>
<dbReference type="InParanoid" id="P0C7N0"/>
<dbReference type="OrthoDB" id="42240at9989"/>
<dbReference type="PhylomeDB" id="P0C7N0"/>
<dbReference type="TreeFam" id="TF324344"/>
<dbReference type="PRO" id="PR:P0C7N0"/>
<dbReference type="Proteomes" id="UP000002494">
    <property type="component" value="Chromosome 2"/>
</dbReference>
<dbReference type="Bgee" id="ENSRNOG00000029893">
    <property type="expression patterns" value="Expressed in testis and 20 other cell types or tissues"/>
</dbReference>
<dbReference type="GO" id="GO:0005737">
    <property type="term" value="C:cytoplasm"/>
    <property type="evidence" value="ECO:0007669"/>
    <property type="project" value="UniProtKB-SubCell"/>
</dbReference>
<dbReference type="GO" id="GO:0005634">
    <property type="term" value="C:nucleus"/>
    <property type="evidence" value="ECO:0007669"/>
    <property type="project" value="UniProtKB-SubCell"/>
</dbReference>
<dbReference type="GO" id="GO:0032088">
    <property type="term" value="P:negative regulation of NF-kappaB transcription factor activity"/>
    <property type="evidence" value="ECO:0000250"/>
    <property type="project" value="UniProtKB"/>
</dbReference>
<dbReference type="GO" id="GO:1902073">
    <property type="term" value="P:positive regulation of hypoxia-inducible factor-1alpha signaling pathway"/>
    <property type="evidence" value="ECO:0000250"/>
    <property type="project" value="UniProtKB"/>
</dbReference>
<dbReference type="GO" id="GO:0033235">
    <property type="term" value="P:positive regulation of protein sumoylation"/>
    <property type="evidence" value="ECO:0000250"/>
    <property type="project" value="UniProtKB"/>
</dbReference>
<dbReference type="CDD" id="cd23819">
    <property type="entry name" value="RWD_RWDD3"/>
    <property type="match status" value="1"/>
</dbReference>
<dbReference type="CDD" id="cd24164">
    <property type="entry name" value="RWDD3_C"/>
    <property type="match status" value="1"/>
</dbReference>
<dbReference type="FunFam" id="3.10.110.10:FF:000070">
    <property type="entry name" value="RWD domain containing 3"/>
    <property type="match status" value="1"/>
</dbReference>
<dbReference type="Gene3D" id="3.10.110.10">
    <property type="entry name" value="Ubiquitin Conjugating Enzyme"/>
    <property type="match status" value="1"/>
</dbReference>
<dbReference type="InterPro" id="IPR006575">
    <property type="entry name" value="RWD_dom"/>
</dbReference>
<dbReference type="InterPro" id="IPR038840">
    <property type="entry name" value="RWDD3"/>
</dbReference>
<dbReference type="InterPro" id="IPR016135">
    <property type="entry name" value="UBQ-conjugating_enzyme/RWD"/>
</dbReference>
<dbReference type="PANTHER" id="PTHR15628">
    <property type="entry name" value="RWD DOMAIN-CONTAINING PROTEIN 3"/>
    <property type="match status" value="1"/>
</dbReference>
<dbReference type="PANTHER" id="PTHR15628:SF1">
    <property type="entry name" value="RWD DOMAIN-CONTAINING PROTEIN 3"/>
    <property type="match status" value="1"/>
</dbReference>
<dbReference type="Pfam" id="PF05773">
    <property type="entry name" value="RWD"/>
    <property type="match status" value="1"/>
</dbReference>
<dbReference type="SMART" id="SM00591">
    <property type="entry name" value="RWD"/>
    <property type="match status" value="1"/>
</dbReference>
<dbReference type="SUPFAM" id="SSF54495">
    <property type="entry name" value="UBC-like"/>
    <property type="match status" value="1"/>
</dbReference>
<dbReference type="PROSITE" id="PS50908">
    <property type="entry name" value="RWD"/>
    <property type="match status" value="1"/>
</dbReference>
<keyword id="KW-0963">Cytoplasm</keyword>
<keyword id="KW-0539">Nucleus</keyword>
<keyword id="KW-1185">Reference proteome</keyword>
<gene>
    <name type="primary">Rwdd3</name>
    <name type="synonym">Rsume</name>
</gene>
<feature type="chain" id="PRO_0000340085" description="RWD domain-containing protein 3">
    <location>
        <begin position="1"/>
        <end position="267"/>
    </location>
</feature>
<feature type="domain" description="RWD" evidence="3">
    <location>
        <begin position="7"/>
        <end position="114"/>
    </location>
</feature>
<feature type="region of interest" description="Interaction with UBE2I/UBC9" evidence="2">
    <location>
        <begin position="13"/>
        <end position="15"/>
    </location>
</feature>
<feature type="region of interest" description="Interaction with UBE2I/UBC9" evidence="2">
    <location>
        <begin position="100"/>
        <end position="102"/>
    </location>
</feature>
<evidence type="ECO:0000250" key="1"/>
<evidence type="ECO:0000250" key="2">
    <source>
        <dbReference type="UniProtKB" id="Q9Y3V2"/>
    </source>
</evidence>
<evidence type="ECO:0000255" key="3">
    <source>
        <dbReference type="PROSITE-ProRule" id="PRU00179"/>
    </source>
</evidence>
<evidence type="ECO:0000303" key="4">
    <source>
    </source>
</evidence>
<name>RWDD3_RAT</name>